<reference key="1">
    <citation type="journal article" date="1999" name="Toxicon">
        <title>Three toxins with phospholipase activity isolated from the yellow-legged hornet (Vespa verutina) venom.</title>
        <authorList>
            <person name="Ho C.L."/>
            <person name="Lin Y.L."/>
            <person name="Li S.F."/>
        </authorList>
    </citation>
    <scope>PROTEIN SEQUENCE</scope>
    <scope>FUNCTION</scope>
    <scope>CATALYTIC ACTIVITY</scope>
    <scope>ACTIVITY REGULATION</scope>
    <scope>TOXIC DOSE</scope>
    <scope>MASS SPECTROMETRY</scope>
    <scope>SUBCELLULAR LOCATION</scope>
    <source>
        <tissue>Venom</tissue>
    </source>
</reference>
<dbReference type="EC" id="3.1.1.32" evidence="2"/>
<dbReference type="EC" id="3.1.1.5" evidence="2"/>
<dbReference type="SMR" id="P0DMB7"/>
<dbReference type="SwissLipids" id="SLP:000001929"/>
<dbReference type="GO" id="GO:0005576">
    <property type="term" value="C:extracellular region"/>
    <property type="evidence" value="ECO:0007669"/>
    <property type="project" value="UniProtKB-SubCell"/>
</dbReference>
<dbReference type="GO" id="GO:0004622">
    <property type="term" value="F:lysophospholipase activity"/>
    <property type="evidence" value="ECO:0007669"/>
    <property type="project" value="RHEA"/>
</dbReference>
<dbReference type="GO" id="GO:0008970">
    <property type="term" value="F:phospholipase A1 activity"/>
    <property type="evidence" value="ECO:0007669"/>
    <property type="project" value="UniProtKB-EC"/>
</dbReference>
<dbReference type="GO" id="GO:0031640">
    <property type="term" value="P:killing of cells of another organism"/>
    <property type="evidence" value="ECO:0007669"/>
    <property type="project" value="UniProtKB-KW"/>
</dbReference>
<dbReference type="GO" id="GO:0016042">
    <property type="term" value="P:lipid catabolic process"/>
    <property type="evidence" value="ECO:0007669"/>
    <property type="project" value="UniProtKB-KW"/>
</dbReference>
<protein>
    <recommendedName>
        <fullName evidence="3">Phospholipase A1 verutoxin-2a</fullName>
        <shortName evidence="4">PLA1</shortName>
        <shortName evidence="3">VT-2a</shortName>
        <ecNumber evidence="2">3.1.1.32</ecNumber>
        <ecNumber evidence="2">3.1.1.5</ecNumber>
    </recommendedName>
</protein>
<organism>
    <name type="scientific">Vespa velutina</name>
    <name type="common">Asian yellow-legged hornet</name>
    <dbReference type="NCBI Taxonomy" id="202808"/>
    <lineage>
        <taxon>Eukaryota</taxon>
        <taxon>Metazoa</taxon>
        <taxon>Ecdysozoa</taxon>
        <taxon>Arthropoda</taxon>
        <taxon>Hexapoda</taxon>
        <taxon>Insecta</taxon>
        <taxon>Pterygota</taxon>
        <taxon>Neoptera</taxon>
        <taxon>Endopterygota</taxon>
        <taxon>Hymenoptera</taxon>
        <taxon>Apocrita</taxon>
        <taxon>Aculeata</taxon>
        <taxon>Vespoidea</taxon>
        <taxon>Vespidae</taxon>
        <taxon>Vespinae</taxon>
        <taxon>Vespa</taxon>
    </lineage>
</organism>
<comment type="function">
    <text evidence="2">Catalyzes the hydrolysis of glycerophospholipids such as phosphatidylcholine (1,2-diacyl-sn-glycero-3-phosphocholine) and has a moderate activity to hydrolyze lysoglycerophospholipids such as lysophosphatidylcholine (1-acyl-sn-glycero-3-phosphocholine), but is unable to hydrolyze sphingomyelin. In addition to acting as an allergen, it possesses a potent hemolytic activity on red blood cells of mice (98.8% of hemolysis at 3.0 ug/ml).</text>
</comment>
<comment type="catalytic activity">
    <reaction evidence="2">
        <text>a 1,2-diacyl-sn-glycero-3-phosphocholine + H2O = a 2-acyl-sn-glycero-3-phosphocholine + a fatty acid + H(+)</text>
        <dbReference type="Rhea" id="RHEA:18689"/>
        <dbReference type="ChEBI" id="CHEBI:15377"/>
        <dbReference type="ChEBI" id="CHEBI:15378"/>
        <dbReference type="ChEBI" id="CHEBI:28868"/>
        <dbReference type="ChEBI" id="CHEBI:57643"/>
        <dbReference type="ChEBI" id="CHEBI:57875"/>
        <dbReference type="EC" id="3.1.1.32"/>
    </reaction>
    <physiologicalReaction direction="left-to-right" evidence="2">
        <dbReference type="Rhea" id="RHEA:18690"/>
    </physiologicalReaction>
</comment>
<comment type="catalytic activity">
    <reaction evidence="2">
        <text>1-(9Z-octadecenoyl)-2-hexadecanoyl-sn-glycero-3-phosphocholine + H2O = 2-hexadecanoyl-sn-glycero-3-phosphocholine + (9Z)-octadecenoate + H(+)</text>
        <dbReference type="Rhea" id="RHEA:38787"/>
        <dbReference type="ChEBI" id="CHEBI:15377"/>
        <dbReference type="ChEBI" id="CHEBI:15378"/>
        <dbReference type="ChEBI" id="CHEBI:30823"/>
        <dbReference type="ChEBI" id="CHEBI:74667"/>
        <dbReference type="ChEBI" id="CHEBI:76078"/>
    </reaction>
    <physiologicalReaction direction="left-to-right" evidence="2">
        <dbReference type="Rhea" id="RHEA:38788"/>
    </physiologicalReaction>
</comment>
<comment type="catalytic activity">
    <reaction evidence="2">
        <text>a 1-acyl-sn-glycero-3-phosphocholine + H2O = sn-glycerol 3-phosphocholine + a fatty acid + H(+)</text>
        <dbReference type="Rhea" id="RHEA:15177"/>
        <dbReference type="ChEBI" id="CHEBI:15377"/>
        <dbReference type="ChEBI" id="CHEBI:15378"/>
        <dbReference type="ChEBI" id="CHEBI:16870"/>
        <dbReference type="ChEBI" id="CHEBI:28868"/>
        <dbReference type="ChEBI" id="CHEBI:58168"/>
        <dbReference type="EC" id="3.1.1.5"/>
    </reaction>
    <physiologicalReaction direction="left-to-right" evidence="2">
        <dbReference type="Rhea" id="RHEA:15178"/>
    </physiologicalReaction>
</comment>
<comment type="activity regulation">
    <text evidence="2">Activity is maximal in the presence of calcium. However, unlike phospholipases A2 whose catalytic activity is strictly calcium-dependent, this enzyme shows considerable catalytic activity on phosphatidylcholine emulsified in calcium free solution; the catalytic activity of VT-2a assayed in the absence of calcium ions is 18-20% of that assayed in solution containing calcium ions.</text>
</comment>
<comment type="pathway">
    <text evidence="5">Phospholipid metabolism.</text>
</comment>
<comment type="subcellular location">
    <subcellularLocation>
        <location evidence="2">Secreted</location>
    </subcellularLocation>
</comment>
<comment type="tissue specificity">
    <text evidence="5">Expressed by the venom gland.</text>
</comment>
<comment type="PTM">
    <text evidence="1">Contains six disulfide bonds.</text>
</comment>
<comment type="mass spectrometry" mass="33360.0" method="Electrospray" evidence="2"/>
<comment type="allergen">
    <text evidence="5">Causes an allergic reaction in human.</text>
</comment>
<comment type="toxic dose">
    <text evidence="2">LD(50) is 0.87 mg/kg by intravenous injection into mice (tail vein).</text>
</comment>
<comment type="miscellaneous">
    <text evidence="5">Is about 0.95% of the total proteins in the venom.</text>
</comment>
<comment type="similarity">
    <text evidence="4">Belongs to the AB hydrolase superfamily. Lipase family.</text>
</comment>
<accession>P0DMB7</accession>
<keyword id="KW-0020">Allergen</keyword>
<keyword id="KW-0204">Cytolysis</keyword>
<keyword id="KW-0903">Direct protein sequencing</keyword>
<keyword id="KW-1015">Disulfide bond</keyword>
<keyword id="KW-0354">Hemolysis</keyword>
<keyword id="KW-0378">Hydrolase</keyword>
<keyword id="KW-0442">Lipid degradation</keyword>
<keyword id="KW-0443">Lipid metabolism</keyword>
<keyword id="KW-0964">Secreted</keyword>
<proteinExistence type="evidence at protein level"/>
<sequence length="25" mass="3012">FNPCPYSDDTVKMIILTRENKKHDF</sequence>
<evidence type="ECO:0000250" key="1"/>
<evidence type="ECO:0000269" key="2">
    <source>
    </source>
</evidence>
<evidence type="ECO:0000303" key="3">
    <source>
    </source>
</evidence>
<evidence type="ECO:0000305" key="4"/>
<evidence type="ECO:0000305" key="5">
    <source>
    </source>
</evidence>
<name>PA12A_VESVE</name>
<feature type="chain" id="PRO_0000425197" description="Phospholipase A1 verutoxin-2a">
    <location>
        <begin position="1"/>
        <end position="25" status="greater than"/>
    </location>
</feature>
<feature type="non-terminal residue">
    <location>
        <position position="25"/>
    </location>
</feature>